<proteinExistence type="inferred from homology"/>
<organism>
    <name type="scientific">Plasmodium vivax (strain Salvador I)</name>
    <dbReference type="NCBI Taxonomy" id="126793"/>
    <lineage>
        <taxon>Eukaryota</taxon>
        <taxon>Sar</taxon>
        <taxon>Alveolata</taxon>
        <taxon>Apicomplexa</taxon>
        <taxon>Aconoidasida</taxon>
        <taxon>Haemosporida</taxon>
        <taxon>Plasmodiidae</taxon>
        <taxon>Plasmodium</taxon>
        <taxon>Plasmodium (Plasmodium)</taxon>
    </lineage>
</organism>
<evidence type="ECO:0000255" key="1">
    <source>
        <dbReference type="HAMAP-Rule" id="MF_03122"/>
    </source>
</evidence>
<evidence type="ECO:0000305" key="2"/>
<accession>A5K7J8</accession>
<sequence>MAVGKNKRTSKGKKGGKKKVTDVFTKKEWYDLKAPKMFLVRNFGKTLVTKTIGKKLATDGLKGRIYEVNLADLNNDEDQAHKKIKLCCDHIINKDCYTDFCGLSITRDKLCSLIRKGYTLIEGYTDVKTIDNYQLRMFCIAFTKKRPNQTKTTCYAQTSQIKKIRKKMVDIMNAEASKVMLKDLVKKFIPESIGKEVEKQCKKIYPLQNVLIRKVKILKRPKLDISKLMELHTDSKEDAGKNVKSLPESKEATNILSAELKH</sequence>
<keyword id="KW-0963">Cytoplasm</keyword>
<keyword id="KW-1185">Reference proteome</keyword>
<keyword id="KW-0687">Ribonucleoprotein</keyword>
<keyword id="KW-0689">Ribosomal protein</keyword>
<gene>
    <name type="ORF">PVX_095080</name>
</gene>
<dbReference type="EMBL" id="AAKM01000008">
    <property type="protein sequence ID" value="EDL44757.1"/>
    <property type="molecule type" value="Genomic_DNA"/>
</dbReference>
<dbReference type="RefSeq" id="XP_001614484.1">
    <property type="nucleotide sequence ID" value="XM_001614434.1"/>
</dbReference>
<dbReference type="SMR" id="A5K7J8"/>
<dbReference type="FunCoup" id="A5K7J8">
    <property type="interactions" value="402"/>
</dbReference>
<dbReference type="STRING" id="126793.A5K7J8"/>
<dbReference type="EnsemblProtists" id="EDL44757">
    <property type="protein sequence ID" value="EDL44757"/>
    <property type="gene ID" value="PVX_095080"/>
</dbReference>
<dbReference type="GeneID" id="5473773"/>
<dbReference type="KEGG" id="pvx:PVX_095080"/>
<dbReference type="VEuPathDB" id="PlasmoDB:PVX_095080"/>
<dbReference type="InParanoid" id="A5K7J8"/>
<dbReference type="OMA" id="TRFKGHE"/>
<dbReference type="PhylomeDB" id="A5K7J8"/>
<dbReference type="Proteomes" id="UP000008333">
    <property type="component" value="Chromosome 8"/>
</dbReference>
<dbReference type="GO" id="GO:0022627">
    <property type="term" value="C:cytosolic small ribosomal subunit"/>
    <property type="evidence" value="ECO:0007669"/>
    <property type="project" value="UniProtKB-UniRule"/>
</dbReference>
<dbReference type="GO" id="GO:0003735">
    <property type="term" value="F:structural constituent of ribosome"/>
    <property type="evidence" value="ECO:0007669"/>
    <property type="project" value="UniProtKB-UniRule"/>
</dbReference>
<dbReference type="GO" id="GO:0006412">
    <property type="term" value="P:translation"/>
    <property type="evidence" value="ECO:0007669"/>
    <property type="project" value="UniProtKB-UniRule"/>
</dbReference>
<dbReference type="HAMAP" id="MF_03122">
    <property type="entry name" value="Ribosomal_eS1_euk"/>
    <property type="match status" value="1"/>
</dbReference>
<dbReference type="InterPro" id="IPR001593">
    <property type="entry name" value="Ribosomal_eS1"/>
</dbReference>
<dbReference type="InterPro" id="IPR027500">
    <property type="entry name" value="Ribosomal_eS1_euk"/>
</dbReference>
<dbReference type="PANTHER" id="PTHR11830">
    <property type="entry name" value="40S RIBOSOMAL PROTEIN S3A"/>
    <property type="match status" value="1"/>
</dbReference>
<dbReference type="Pfam" id="PF01015">
    <property type="entry name" value="Ribosomal_S3Ae"/>
    <property type="match status" value="1"/>
</dbReference>
<dbReference type="SMART" id="SM01397">
    <property type="entry name" value="Ribosomal_S3Ae"/>
    <property type="match status" value="1"/>
</dbReference>
<protein>
    <recommendedName>
        <fullName evidence="1">Small ribosomal subunit protein eS1</fullName>
    </recommendedName>
    <alternativeName>
        <fullName evidence="2">40S ribosomal protein S3a</fullName>
    </alternativeName>
</protein>
<comment type="subunit">
    <text evidence="1">Component of the small ribosomal subunit. Mature ribosomes consist of a small (40S) and a large (60S) subunit. The 40S subunit contains about 33 different proteins and 1 molecule of RNA (18S). The 60S subunit contains about 49 different proteins and 3 molecules of RNA (25S, 5.8S and 5S).</text>
</comment>
<comment type="subcellular location">
    <subcellularLocation>
        <location evidence="1">Cytoplasm</location>
    </subcellularLocation>
</comment>
<comment type="similarity">
    <text evidence="1">Belongs to the eukaryotic ribosomal protein eS1 family.</text>
</comment>
<reference key="1">
    <citation type="journal article" date="2008" name="Nature">
        <title>Comparative genomics of the neglected human malaria parasite Plasmodium vivax.</title>
        <authorList>
            <person name="Carlton J.M."/>
            <person name="Adams J.H."/>
            <person name="Silva J.C."/>
            <person name="Bidwell S.L."/>
            <person name="Lorenzi H."/>
            <person name="Caler E."/>
            <person name="Crabtree J."/>
            <person name="Angiuoli S.V."/>
            <person name="Merino E.F."/>
            <person name="Amedeo P."/>
            <person name="Cheng Q."/>
            <person name="Coulson R.M.R."/>
            <person name="Crabb B.S."/>
            <person name="del Portillo H.A."/>
            <person name="Essien K."/>
            <person name="Feldblyum T.V."/>
            <person name="Fernandez-Becerra C."/>
            <person name="Gilson P.R."/>
            <person name="Gueye A.H."/>
            <person name="Guo X."/>
            <person name="Kang'a S."/>
            <person name="Kooij T.W.A."/>
            <person name="Korsinczky M."/>
            <person name="Meyer E.V.-S."/>
            <person name="Nene V."/>
            <person name="Paulsen I."/>
            <person name="White O."/>
            <person name="Ralph S.A."/>
            <person name="Ren Q."/>
            <person name="Sargeant T.J."/>
            <person name="Salzberg S.L."/>
            <person name="Stoeckert C.J."/>
            <person name="Sullivan S.A."/>
            <person name="Yamamoto M.M."/>
            <person name="Hoffman S.L."/>
            <person name="Wortman J.R."/>
            <person name="Gardner M.J."/>
            <person name="Galinski M.R."/>
            <person name="Barnwell J.W."/>
            <person name="Fraser-Liggett C.M."/>
        </authorList>
    </citation>
    <scope>NUCLEOTIDE SEQUENCE [LARGE SCALE GENOMIC DNA]</scope>
    <source>
        <strain>Salvador I</strain>
    </source>
</reference>
<feature type="initiator methionine" description="Removed" evidence="1">
    <location>
        <position position="1"/>
    </location>
</feature>
<feature type="chain" id="PRO_0000389338" description="Small ribosomal subunit protein eS1">
    <location>
        <begin position="2"/>
        <end position="262"/>
    </location>
</feature>
<name>RS3A_PLAVS</name>